<protein>
    <recommendedName>
        <fullName>TWiK family of potassium channels protein 7</fullName>
    </recommendedName>
</protein>
<feature type="chain" id="PRO_0000101771" description="TWiK family of potassium channels protein 7">
    <location>
        <begin position="1"/>
        <end position="557"/>
    </location>
</feature>
<feature type="topological domain" description="Cytoplasmic" evidence="1">
    <location>
        <begin position="1"/>
        <end position="165"/>
    </location>
</feature>
<feature type="transmembrane region" description="Helical" evidence="1">
    <location>
        <begin position="166"/>
        <end position="186"/>
    </location>
</feature>
<feature type="intramembrane region" description="Pore-forming; Name=Pore-forming 1" evidence="1">
    <location>
        <begin position="270"/>
        <end position="290"/>
    </location>
</feature>
<feature type="transmembrane region" description="Helical" evidence="1">
    <location>
        <begin position="295"/>
        <end position="315"/>
    </location>
</feature>
<feature type="topological domain" description="Cytoplasmic" evidence="1">
    <location>
        <begin position="316"/>
        <end position="368"/>
    </location>
</feature>
<feature type="transmembrane region" description="Helical" evidence="1">
    <location>
        <begin position="369"/>
        <end position="389"/>
    </location>
</feature>
<feature type="intramembrane region" description="Pore-forming; Name=Pore-forming 2" evidence="1">
    <location>
        <begin position="397"/>
        <end position="417"/>
    </location>
</feature>
<feature type="transmembrane region" description="Helical" evidence="1">
    <location>
        <begin position="426"/>
        <end position="446"/>
    </location>
</feature>
<feature type="topological domain" description="Cytoplasmic" evidence="1">
    <location>
        <begin position="447"/>
        <end position="557"/>
    </location>
</feature>
<feature type="region of interest" description="Disordered" evidence="2">
    <location>
        <begin position="1"/>
        <end position="34"/>
    </location>
</feature>
<feature type="region of interest" description="Disordered" evidence="2">
    <location>
        <begin position="128"/>
        <end position="151"/>
    </location>
</feature>
<feature type="compositionally biased region" description="Acidic residues" evidence="2">
    <location>
        <begin position="134"/>
        <end position="151"/>
    </location>
</feature>
<feature type="glycosylation site" description="N-linked (GlcNAc...) asparagine" evidence="1">
    <location>
        <position position="220"/>
    </location>
</feature>
<feature type="glycosylation site" description="N-linked (GlcNAc...) asparagine" evidence="1">
    <location>
        <position position="237"/>
    </location>
</feature>
<name>TWK7_CAEEL</name>
<comment type="subcellular location">
    <subcellularLocation>
        <location evidence="3">Membrane</location>
        <topology evidence="3">Multi-pass membrane protein</topology>
    </subcellularLocation>
</comment>
<comment type="similarity">
    <text evidence="3">Belongs to the two pore domain potassium channel (TC 1.A.1.8) family.</text>
</comment>
<dbReference type="EMBL" id="FO080222">
    <property type="protein sequence ID" value="CCD62137.1"/>
    <property type="molecule type" value="Genomic_DNA"/>
</dbReference>
<dbReference type="PIR" id="S44633">
    <property type="entry name" value="S44633"/>
</dbReference>
<dbReference type="PIR" id="S44635">
    <property type="entry name" value="S44635"/>
</dbReference>
<dbReference type="RefSeq" id="NP_498903.3">
    <property type="nucleotide sequence ID" value="NM_066502.5"/>
</dbReference>
<dbReference type="BioGRID" id="56565">
    <property type="interactions" value="1"/>
</dbReference>
<dbReference type="FunCoup" id="P34410">
    <property type="interactions" value="4"/>
</dbReference>
<dbReference type="STRING" id="6239.F22B7.7.1"/>
<dbReference type="GlyCosmos" id="P34410">
    <property type="glycosylation" value="2 sites, No reported glycans"/>
</dbReference>
<dbReference type="PaxDb" id="6239-F22B7.7"/>
<dbReference type="EnsemblMetazoa" id="F22B7.7.1">
    <property type="protein sequence ID" value="F22B7.7.1"/>
    <property type="gene ID" value="WBGene00006662"/>
</dbReference>
<dbReference type="GeneID" id="192073"/>
<dbReference type="KEGG" id="cel:CELE_F22B7.7"/>
<dbReference type="UCSC" id="F22B7.7">
    <property type="organism name" value="c. elegans"/>
</dbReference>
<dbReference type="AGR" id="WB:WBGene00006662"/>
<dbReference type="CTD" id="192073"/>
<dbReference type="WormBase" id="F22B7.7">
    <property type="protein sequence ID" value="CE37508"/>
    <property type="gene ID" value="WBGene00006662"/>
    <property type="gene designation" value="twk-7"/>
</dbReference>
<dbReference type="eggNOG" id="KOG1418">
    <property type="taxonomic scope" value="Eukaryota"/>
</dbReference>
<dbReference type="HOGENOM" id="CLU_022504_0_0_1"/>
<dbReference type="InParanoid" id="P34410"/>
<dbReference type="OMA" id="PRRDGYM"/>
<dbReference type="OrthoDB" id="297496at2759"/>
<dbReference type="PhylomeDB" id="P34410"/>
<dbReference type="PRO" id="PR:P34410"/>
<dbReference type="Proteomes" id="UP000001940">
    <property type="component" value="Chromosome III"/>
</dbReference>
<dbReference type="Bgee" id="WBGene00006662">
    <property type="expression patterns" value="Expressed in larva and 3 other cell types or tissues"/>
</dbReference>
<dbReference type="GO" id="GO:0005886">
    <property type="term" value="C:plasma membrane"/>
    <property type="evidence" value="ECO:0000318"/>
    <property type="project" value="GO_Central"/>
</dbReference>
<dbReference type="GO" id="GO:0015271">
    <property type="term" value="F:outward rectifier potassium channel activity"/>
    <property type="evidence" value="ECO:0000318"/>
    <property type="project" value="GO_Central"/>
</dbReference>
<dbReference type="GO" id="GO:0022841">
    <property type="term" value="F:potassium ion leak channel activity"/>
    <property type="evidence" value="ECO:0000318"/>
    <property type="project" value="GO_Central"/>
</dbReference>
<dbReference type="GO" id="GO:0071805">
    <property type="term" value="P:potassium ion transmembrane transport"/>
    <property type="evidence" value="ECO:0000318"/>
    <property type="project" value="GO_Central"/>
</dbReference>
<dbReference type="Gene3D" id="1.10.287.70">
    <property type="match status" value="1"/>
</dbReference>
<dbReference type="InterPro" id="IPR003280">
    <property type="entry name" value="2pore_dom_K_chnl"/>
</dbReference>
<dbReference type="InterPro" id="IPR003092">
    <property type="entry name" value="2pore_dom_K_chnl_TASK"/>
</dbReference>
<dbReference type="InterPro" id="IPR013099">
    <property type="entry name" value="K_chnl_dom"/>
</dbReference>
<dbReference type="PANTHER" id="PTHR11003">
    <property type="entry name" value="POTASSIUM CHANNEL, SUBFAMILY K"/>
    <property type="match status" value="1"/>
</dbReference>
<dbReference type="PANTHER" id="PTHR11003:SF333">
    <property type="entry name" value="TWIK FAMILY OF POTASSIUM CHANNELS PROTEIN 7"/>
    <property type="match status" value="1"/>
</dbReference>
<dbReference type="Pfam" id="PF07885">
    <property type="entry name" value="Ion_trans_2"/>
    <property type="match status" value="2"/>
</dbReference>
<dbReference type="PRINTS" id="PR01333">
    <property type="entry name" value="2POREKCHANEL"/>
</dbReference>
<dbReference type="PRINTS" id="PR01095">
    <property type="entry name" value="TASKCHANNEL"/>
</dbReference>
<dbReference type="SUPFAM" id="SSF81324">
    <property type="entry name" value="Voltage-gated potassium channels"/>
    <property type="match status" value="2"/>
</dbReference>
<keyword id="KW-0325">Glycoprotein</keyword>
<keyword id="KW-0407">Ion channel</keyword>
<keyword id="KW-0406">Ion transport</keyword>
<keyword id="KW-0472">Membrane</keyword>
<keyword id="KW-0630">Potassium</keyword>
<keyword id="KW-0631">Potassium channel</keyword>
<keyword id="KW-0633">Potassium transport</keyword>
<keyword id="KW-1185">Reference proteome</keyword>
<keyword id="KW-0812">Transmembrane</keyword>
<keyword id="KW-1133">Transmembrane helix</keyword>
<keyword id="KW-0813">Transport</keyword>
<evidence type="ECO:0000255" key="1"/>
<evidence type="ECO:0000256" key="2">
    <source>
        <dbReference type="SAM" id="MobiDB-lite"/>
    </source>
</evidence>
<evidence type="ECO:0000305" key="3"/>
<organism>
    <name type="scientific">Caenorhabditis elegans</name>
    <dbReference type="NCBI Taxonomy" id="6239"/>
    <lineage>
        <taxon>Eukaryota</taxon>
        <taxon>Metazoa</taxon>
        <taxon>Ecdysozoa</taxon>
        <taxon>Nematoda</taxon>
        <taxon>Chromadorea</taxon>
        <taxon>Rhabditida</taxon>
        <taxon>Rhabditina</taxon>
        <taxon>Rhabditomorpha</taxon>
        <taxon>Rhabditoidea</taxon>
        <taxon>Rhabditidae</taxon>
        <taxon>Peloderinae</taxon>
        <taxon>Caenorhabditis</taxon>
    </lineage>
</organism>
<sequence>MTSSSRGYQRVDSSGDGGSLLMEEEGDNPHEALLHRNNDDYASTYHHVGVEYDSYEELERHEMDDRVTEIPEGFHRRQRRNLIYGDDVATDEELRVLRREALFGEEVTRAGLGRAEYYEDSHLIHSCDKSGHEDIDDESDDESKDEDEEEEETGIRKFAKLVLPHVALVLLTCTYTVIGALIFYSVEQPHEQMMKEQQLKLIYTRQNEFVDDLIRLAAGNETKRYEWESLAERHMHNMSDQLFVAFEKYFLTSNEVKKNAATETWTFSSSIFFAVTVVTTIGYGNPVPVTNIGRIWCILFSLLGIPLTLVTIADLGKFLSEHLVWLYGNYLKLKYLILSRHRKERREHVCEHCHSHGMGHDMNIEEKRIPAFLVLAILIVYTAFGGVLMSKLEPWSFFTSFYWSFITMTTVGFGDLMPRRDGYMYIILLYIILGLAITTMCIDLVGVQYIRKIHYFGRKIQDARSALAVVGGKVVLVSELYANLMQKRARNMSREAFIVENLYVSKHIIPFIPTDIRCIRYIDQTADAATISTSSSAIDMQSCRFCHSRYSLNRAFK</sequence>
<accession>P34410</accession>
<accession>P34411</accession>
<accession>Q629K0</accession>
<reference key="1">
    <citation type="journal article" date="1994" name="Nature">
        <title>2.2 Mb of contiguous nucleotide sequence from chromosome III of C. elegans.</title>
        <authorList>
            <person name="Wilson R."/>
            <person name="Ainscough R."/>
            <person name="Anderson K."/>
            <person name="Baynes C."/>
            <person name="Berks M."/>
            <person name="Bonfield J."/>
            <person name="Burton J."/>
            <person name="Connell M."/>
            <person name="Copsey T."/>
            <person name="Cooper J."/>
            <person name="Coulson A."/>
            <person name="Craxton M."/>
            <person name="Dear S."/>
            <person name="Du Z."/>
            <person name="Durbin R."/>
            <person name="Favello A."/>
            <person name="Fraser A."/>
            <person name="Fulton L."/>
            <person name="Gardner A."/>
            <person name="Green P."/>
            <person name="Hawkins T."/>
            <person name="Hillier L."/>
            <person name="Jier M."/>
            <person name="Johnston L."/>
            <person name="Jones M."/>
            <person name="Kershaw J."/>
            <person name="Kirsten J."/>
            <person name="Laisster N."/>
            <person name="Latreille P."/>
            <person name="Lightning J."/>
            <person name="Lloyd C."/>
            <person name="Mortimore B."/>
            <person name="O'Callaghan M."/>
            <person name="Parsons J."/>
            <person name="Percy C."/>
            <person name="Rifken L."/>
            <person name="Roopra A."/>
            <person name="Saunders D."/>
            <person name="Shownkeen R."/>
            <person name="Sims M."/>
            <person name="Smaldon N."/>
            <person name="Smith A."/>
            <person name="Smith M."/>
            <person name="Sonnhammer E."/>
            <person name="Staden R."/>
            <person name="Sulston J."/>
            <person name="Thierry-Mieg J."/>
            <person name="Thomas K."/>
            <person name="Vaudin M."/>
            <person name="Vaughan K."/>
            <person name="Waterston R."/>
            <person name="Watson A."/>
            <person name="Weinstock L."/>
            <person name="Wilkinson-Sproat J."/>
            <person name="Wohldman P."/>
        </authorList>
    </citation>
    <scope>NUCLEOTIDE SEQUENCE [LARGE SCALE GENOMIC DNA]</scope>
    <source>
        <strain>Bristol N2</strain>
    </source>
</reference>
<reference key="2">
    <citation type="journal article" date="1998" name="Science">
        <title>Genome sequence of the nematode C. elegans: a platform for investigating biology.</title>
        <authorList>
            <consortium name="The C. elegans sequencing consortium"/>
        </authorList>
    </citation>
    <scope>NUCLEOTIDE SEQUENCE [LARGE SCALE GENOMIC DNA]</scope>
    <source>
        <strain>Bristol N2</strain>
    </source>
</reference>
<proteinExistence type="inferred from homology"/>
<gene>
    <name type="primary">twk-7</name>
    <name type="synonym">twk-8</name>
    <name type="ORF">F22B7.7</name>
</gene>